<sequence>MSRVAKAPVVVPAGVDVKINGQVITIKGKNGELTRTLNDAVEVKHADNALTFGPRDGYADGWAQAGTARALLNSMVIGVTEGFTKKLQLVGVGYRAAVKGNVVNLSLGFSHPVDHQLPAGITAECPTQTEIVLKGADKQVIGQVAADLRAYRRPEPYKGKGVRYADEVVRTKEAKKK</sequence>
<feature type="chain" id="PRO_0000265292" description="Large ribosomal subunit protein uL6">
    <location>
        <begin position="1"/>
        <end position="177"/>
    </location>
</feature>
<organism>
    <name type="scientific">Salmonella paratyphi A (strain ATCC 9150 / SARB42)</name>
    <dbReference type="NCBI Taxonomy" id="295319"/>
    <lineage>
        <taxon>Bacteria</taxon>
        <taxon>Pseudomonadati</taxon>
        <taxon>Pseudomonadota</taxon>
        <taxon>Gammaproteobacteria</taxon>
        <taxon>Enterobacterales</taxon>
        <taxon>Enterobacteriaceae</taxon>
        <taxon>Salmonella</taxon>
    </lineage>
</organism>
<keyword id="KW-0687">Ribonucleoprotein</keyword>
<keyword id="KW-0689">Ribosomal protein</keyword>
<keyword id="KW-0694">RNA-binding</keyword>
<keyword id="KW-0699">rRNA-binding</keyword>
<evidence type="ECO:0000255" key="1">
    <source>
        <dbReference type="HAMAP-Rule" id="MF_01365"/>
    </source>
</evidence>
<evidence type="ECO:0000305" key="2"/>
<dbReference type="EMBL" id="CP000026">
    <property type="protein sequence ID" value="AAV79107.1"/>
    <property type="molecule type" value="Genomic_DNA"/>
</dbReference>
<dbReference type="RefSeq" id="WP_000091939.1">
    <property type="nucleotide sequence ID" value="NC_006511.1"/>
</dbReference>
<dbReference type="SMR" id="Q5PIU8"/>
<dbReference type="KEGG" id="spt:SPA3291"/>
<dbReference type="HOGENOM" id="CLU_065464_1_2_6"/>
<dbReference type="Proteomes" id="UP000008185">
    <property type="component" value="Chromosome"/>
</dbReference>
<dbReference type="GO" id="GO:0022625">
    <property type="term" value="C:cytosolic large ribosomal subunit"/>
    <property type="evidence" value="ECO:0007669"/>
    <property type="project" value="TreeGrafter"/>
</dbReference>
<dbReference type="GO" id="GO:0019843">
    <property type="term" value="F:rRNA binding"/>
    <property type="evidence" value="ECO:0007669"/>
    <property type="project" value="UniProtKB-UniRule"/>
</dbReference>
<dbReference type="GO" id="GO:0003735">
    <property type="term" value="F:structural constituent of ribosome"/>
    <property type="evidence" value="ECO:0007669"/>
    <property type="project" value="InterPro"/>
</dbReference>
<dbReference type="GO" id="GO:0002181">
    <property type="term" value="P:cytoplasmic translation"/>
    <property type="evidence" value="ECO:0007669"/>
    <property type="project" value="TreeGrafter"/>
</dbReference>
<dbReference type="FunFam" id="3.90.930.12:FF:000001">
    <property type="entry name" value="50S ribosomal protein L6"/>
    <property type="match status" value="1"/>
</dbReference>
<dbReference type="FunFam" id="3.90.930.12:FF:000002">
    <property type="entry name" value="50S ribosomal protein L6"/>
    <property type="match status" value="1"/>
</dbReference>
<dbReference type="Gene3D" id="3.90.930.12">
    <property type="entry name" value="Ribosomal protein L6, alpha-beta domain"/>
    <property type="match status" value="2"/>
</dbReference>
<dbReference type="HAMAP" id="MF_01365_B">
    <property type="entry name" value="Ribosomal_uL6_B"/>
    <property type="match status" value="1"/>
</dbReference>
<dbReference type="InterPro" id="IPR000702">
    <property type="entry name" value="Ribosomal_uL6-like"/>
</dbReference>
<dbReference type="InterPro" id="IPR036789">
    <property type="entry name" value="Ribosomal_uL6-like_a/b-dom_sf"/>
</dbReference>
<dbReference type="InterPro" id="IPR020040">
    <property type="entry name" value="Ribosomal_uL6_a/b-dom"/>
</dbReference>
<dbReference type="InterPro" id="IPR019906">
    <property type="entry name" value="Ribosomal_uL6_bac-type"/>
</dbReference>
<dbReference type="InterPro" id="IPR002358">
    <property type="entry name" value="Ribosomal_uL6_CS"/>
</dbReference>
<dbReference type="NCBIfam" id="TIGR03654">
    <property type="entry name" value="L6_bact"/>
    <property type="match status" value="1"/>
</dbReference>
<dbReference type="PANTHER" id="PTHR11655">
    <property type="entry name" value="60S/50S RIBOSOMAL PROTEIN L6/L9"/>
    <property type="match status" value="1"/>
</dbReference>
<dbReference type="PANTHER" id="PTHR11655:SF14">
    <property type="entry name" value="LARGE RIBOSOMAL SUBUNIT PROTEIN UL6M"/>
    <property type="match status" value="1"/>
</dbReference>
<dbReference type="Pfam" id="PF00347">
    <property type="entry name" value="Ribosomal_L6"/>
    <property type="match status" value="2"/>
</dbReference>
<dbReference type="PIRSF" id="PIRSF002162">
    <property type="entry name" value="Ribosomal_L6"/>
    <property type="match status" value="1"/>
</dbReference>
<dbReference type="PRINTS" id="PR00059">
    <property type="entry name" value="RIBOSOMALL6"/>
</dbReference>
<dbReference type="SUPFAM" id="SSF56053">
    <property type="entry name" value="Ribosomal protein L6"/>
    <property type="match status" value="2"/>
</dbReference>
<dbReference type="PROSITE" id="PS00525">
    <property type="entry name" value="RIBOSOMAL_L6_1"/>
    <property type="match status" value="1"/>
</dbReference>
<proteinExistence type="inferred from homology"/>
<reference key="1">
    <citation type="journal article" date="2004" name="Nat. Genet.">
        <title>Comparison of genome degradation in Paratyphi A and Typhi, human-restricted serovars of Salmonella enterica that cause typhoid.</title>
        <authorList>
            <person name="McClelland M."/>
            <person name="Sanderson K.E."/>
            <person name="Clifton S.W."/>
            <person name="Latreille P."/>
            <person name="Porwollik S."/>
            <person name="Sabo A."/>
            <person name="Meyer R."/>
            <person name="Bieri T."/>
            <person name="Ozersky P."/>
            <person name="McLellan M."/>
            <person name="Harkins C.R."/>
            <person name="Wang C."/>
            <person name="Nguyen C."/>
            <person name="Berghoff A."/>
            <person name="Elliott G."/>
            <person name="Kohlberg S."/>
            <person name="Strong C."/>
            <person name="Du F."/>
            <person name="Carter J."/>
            <person name="Kremizki C."/>
            <person name="Layman D."/>
            <person name="Leonard S."/>
            <person name="Sun H."/>
            <person name="Fulton L."/>
            <person name="Nash W."/>
            <person name="Miner T."/>
            <person name="Minx P."/>
            <person name="Delehaunty K."/>
            <person name="Fronick C."/>
            <person name="Magrini V."/>
            <person name="Nhan M."/>
            <person name="Warren W."/>
            <person name="Florea L."/>
            <person name="Spieth J."/>
            <person name="Wilson R.K."/>
        </authorList>
    </citation>
    <scope>NUCLEOTIDE SEQUENCE [LARGE SCALE GENOMIC DNA]</scope>
    <source>
        <strain>ATCC 9150 / SARB42</strain>
    </source>
</reference>
<gene>
    <name evidence="1" type="primary">rplF</name>
    <name type="ordered locus">SPA3291</name>
</gene>
<comment type="function">
    <text evidence="1">This protein binds to the 23S rRNA, and is important in its secondary structure. It is located near the subunit interface in the base of the L7/L12 stalk, and near the tRNA binding site of the peptidyltransferase center.</text>
</comment>
<comment type="subunit">
    <text evidence="1">Part of the 50S ribosomal subunit.</text>
</comment>
<comment type="similarity">
    <text evidence="1">Belongs to the universal ribosomal protein uL6 family.</text>
</comment>
<accession>Q5PIU8</accession>
<name>RL6_SALPA</name>
<protein>
    <recommendedName>
        <fullName evidence="1">Large ribosomal subunit protein uL6</fullName>
    </recommendedName>
    <alternativeName>
        <fullName evidence="2">50S ribosomal protein L6</fullName>
    </alternativeName>
</protein>